<sequence>MPFVTIDLFEGRSQEQKNQLAREVTEVVSRIAKAPKENIHVFINDMPEGTYYPQGEMKQKS</sequence>
<name>Y857_STRP6</name>
<dbReference type="EC" id="5.3.2.-"/>
<dbReference type="EMBL" id="CP000003">
    <property type="protein sequence ID" value="AAT86992.1"/>
    <property type="molecule type" value="Genomic_DNA"/>
</dbReference>
<dbReference type="RefSeq" id="WP_002984671.1">
    <property type="nucleotide sequence ID" value="NC_006086.1"/>
</dbReference>
<dbReference type="SMR" id="Q5XC71"/>
<dbReference type="KEGG" id="spa:M6_Spy0857"/>
<dbReference type="HOGENOM" id="CLU_148073_5_1_9"/>
<dbReference type="Proteomes" id="UP000001167">
    <property type="component" value="Chromosome"/>
</dbReference>
<dbReference type="GO" id="GO:0016853">
    <property type="term" value="F:isomerase activity"/>
    <property type="evidence" value="ECO:0007669"/>
    <property type="project" value="UniProtKB-KW"/>
</dbReference>
<dbReference type="Gene3D" id="3.30.429.10">
    <property type="entry name" value="Macrophage Migration Inhibitory Factor"/>
    <property type="match status" value="1"/>
</dbReference>
<dbReference type="InterPro" id="IPR004370">
    <property type="entry name" value="4-OT-like_dom"/>
</dbReference>
<dbReference type="InterPro" id="IPR014347">
    <property type="entry name" value="Tautomerase/MIF_sf"/>
</dbReference>
<dbReference type="NCBIfam" id="NF002571">
    <property type="entry name" value="PRK02220.1"/>
    <property type="match status" value="1"/>
</dbReference>
<dbReference type="NCBIfam" id="NF002622">
    <property type="entry name" value="PRK02289.1"/>
    <property type="match status" value="1"/>
</dbReference>
<dbReference type="PANTHER" id="PTHR35530:SF1">
    <property type="entry name" value="2-HYDROXYMUCONATE TAUTOMERASE"/>
    <property type="match status" value="1"/>
</dbReference>
<dbReference type="PANTHER" id="PTHR35530">
    <property type="entry name" value="TAUTOMERASE-RELATED"/>
    <property type="match status" value="1"/>
</dbReference>
<dbReference type="Pfam" id="PF01361">
    <property type="entry name" value="Tautomerase"/>
    <property type="match status" value="1"/>
</dbReference>
<dbReference type="SUPFAM" id="SSF55331">
    <property type="entry name" value="Tautomerase/MIF"/>
    <property type="match status" value="1"/>
</dbReference>
<evidence type="ECO:0000250" key="1"/>
<evidence type="ECO:0000305" key="2"/>
<organism>
    <name type="scientific">Streptococcus pyogenes serotype M6 (strain ATCC BAA-946 / MGAS10394)</name>
    <dbReference type="NCBI Taxonomy" id="286636"/>
    <lineage>
        <taxon>Bacteria</taxon>
        <taxon>Bacillati</taxon>
        <taxon>Bacillota</taxon>
        <taxon>Bacilli</taxon>
        <taxon>Lactobacillales</taxon>
        <taxon>Streptococcaceae</taxon>
        <taxon>Streptococcus</taxon>
    </lineage>
</organism>
<comment type="similarity">
    <text evidence="2">Belongs to the 4-oxalocrotonate tautomerase family.</text>
</comment>
<feature type="initiator methionine" description="Removed" evidence="1">
    <location>
        <position position="1"/>
    </location>
</feature>
<feature type="chain" id="PRO_0000209557" description="Probable tautomerase M6_Spy0857">
    <location>
        <begin position="2"/>
        <end position="61"/>
    </location>
</feature>
<feature type="active site" description="Proton acceptor; via imino nitrogen" evidence="1">
    <location>
        <position position="2"/>
    </location>
</feature>
<reference key="1">
    <citation type="journal article" date="2004" name="J. Infect. Dis.">
        <title>Progress toward characterization of the group A Streptococcus metagenome: complete genome sequence of a macrolide-resistant serotype M6 strain.</title>
        <authorList>
            <person name="Banks D.J."/>
            <person name="Porcella S.F."/>
            <person name="Barbian K.D."/>
            <person name="Beres S.B."/>
            <person name="Philips L.E."/>
            <person name="Voyich J.M."/>
            <person name="DeLeo F.R."/>
            <person name="Martin J.M."/>
            <person name="Somerville G.A."/>
            <person name="Musser J.M."/>
        </authorList>
    </citation>
    <scope>NUCLEOTIDE SEQUENCE [LARGE SCALE GENOMIC DNA]</scope>
    <source>
        <strain>ATCC BAA-946 / MGAS10394</strain>
    </source>
</reference>
<keyword id="KW-0413">Isomerase</keyword>
<accession>Q5XC71</accession>
<gene>
    <name type="ordered locus">M6_Spy0857</name>
</gene>
<proteinExistence type="inferred from homology"/>
<protein>
    <recommendedName>
        <fullName>Probable tautomerase M6_Spy0857</fullName>
        <ecNumber>5.3.2.-</ecNumber>
    </recommendedName>
</protein>